<name>LEA29_ARATH</name>
<dbReference type="EMBL" id="X91912">
    <property type="protein sequence ID" value="CAA63006.1"/>
    <property type="molecule type" value="mRNA"/>
</dbReference>
<dbReference type="EMBL" id="AB017071">
    <property type="protein sequence ID" value="BAB02298.1"/>
    <property type="molecule type" value="Genomic_DNA"/>
</dbReference>
<dbReference type="EMBL" id="CP002686">
    <property type="protein sequence ID" value="AEE75712.1"/>
    <property type="molecule type" value="Genomic_DNA"/>
</dbReference>
<dbReference type="EMBL" id="AY040026">
    <property type="protein sequence ID" value="AAK64183.1"/>
    <property type="molecule type" value="mRNA"/>
</dbReference>
<dbReference type="EMBL" id="AY054162">
    <property type="protein sequence ID" value="AAL06823.1"/>
    <property type="molecule type" value="mRNA"/>
</dbReference>
<dbReference type="EMBL" id="AY079410">
    <property type="protein sequence ID" value="AAL85141.1"/>
    <property type="molecule type" value="mRNA"/>
</dbReference>
<dbReference type="RefSeq" id="NP_188188.1">
    <property type="nucleotide sequence ID" value="NM_112437.2"/>
</dbReference>
<dbReference type="SMR" id="Q9LW12"/>
<dbReference type="FunCoup" id="Q9LW12">
    <property type="interactions" value="17"/>
</dbReference>
<dbReference type="STRING" id="3702.Q9LW12"/>
<dbReference type="iPTMnet" id="Q9LW12"/>
<dbReference type="PaxDb" id="3702-AT3G15670.1"/>
<dbReference type="ProMEX" id="Q9LW12"/>
<dbReference type="ProteomicsDB" id="230350"/>
<dbReference type="EnsemblPlants" id="AT3G15670.1">
    <property type="protein sequence ID" value="AT3G15670.1"/>
    <property type="gene ID" value="AT3G15670"/>
</dbReference>
<dbReference type="GeneID" id="820810"/>
<dbReference type="Gramene" id="AT3G15670.1">
    <property type="protein sequence ID" value="AT3G15670.1"/>
    <property type="gene ID" value="AT3G15670"/>
</dbReference>
<dbReference type="KEGG" id="ath:AT3G15670"/>
<dbReference type="Araport" id="AT3G15670"/>
<dbReference type="TAIR" id="AT3G15670">
    <property type="gene designation" value="LEA76"/>
</dbReference>
<dbReference type="eggNOG" id="KOG4744">
    <property type="taxonomic scope" value="Eukaryota"/>
</dbReference>
<dbReference type="HOGENOM" id="CLU_100093_1_0_1"/>
<dbReference type="InParanoid" id="Q9LW12"/>
<dbReference type="OMA" id="MDAMATQ"/>
<dbReference type="OrthoDB" id="2193576at2759"/>
<dbReference type="PhylomeDB" id="Q9LW12"/>
<dbReference type="PRO" id="PR:Q9LW12"/>
<dbReference type="Proteomes" id="UP000006548">
    <property type="component" value="Chromosome 3"/>
</dbReference>
<dbReference type="ExpressionAtlas" id="Q9LW12">
    <property type="expression patterns" value="baseline and differential"/>
</dbReference>
<dbReference type="GO" id="GO:0005829">
    <property type="term" value="C:cytosol"/>
    <property type="evidence" value="ECO:0007005"/>
    <property type="project" value="TAIR"/>
</dbReference>
<dbReference type="GO" id="GO:0005634">
    <property type="term" value="C:nucleus"/>
    <property type="evidence" value="ECO:0007005"/>
    <property type="project" value="TAIR"/>
</dbReference>
<dbReference type="GO" id="GO:0009409">
    <property type="term" value="P:response to cold"/>
    <property type="evidence" value="ECO:0000314"/>
    <property type="project" value="DisProt"/>
</dbReference>
<dbReference type="FunFam" id="1.10.287.700:FF:000003">
    <property type="entry name" value="Late embryogenesis abundant protein 29"/>
    <property type="match status" value="1"/>
</dbReference>
<dbReference type="Gene3D" id="6.10.140.1430">
    <property type="match status" value="1"/>
</dbReference>
<dbReference type="Gene3D" id="1.10.287.700">
    <property type="entry name" value="Helix hairpin bin"/>
    <property type="match status" value="1"/>
</dbReference>
<dbReference type="PANTHER" id="PTHR47372">
    <property type="entry name" value="DAUER UP-REGULATED-RELATED"/>
    <property type="match status" value="1"/>
</dbReference>
<dbReference type="PANTHER" id="PTHR47372:SF11">
    <property type="entry name" value="RE19971P"/>
    <property type="match status" value="1"/>
</dbReference>
<gene>
    <name evidence="5" type="primary">LEA29</name>
    <name evidence="6" type="synonym">LEA76</name>
    <name evidence="8" type="ordered locus">At3g15670</name>
    <name evidence="9" type="ORF">MSJ11.7</name>
</gene>
<evidence type="ECO:0000250" key="1">
    <source>
        <dbReference type="UniProtKB" id="Q96270"/>
    </source>
</evidence>
<evidence type="ECO:0000256" key="2">
    <source>
        <dbReference type="SAM" id="MobiDB-lite"/>
    </source>
</evidence>
<evidence type="ECO:0000269" key="3">
    <source>
    </source>
</evidence>
<evidence type="ECO:0000269" key="4">
    <source>
    </source>
</evidence>
<evidence type="ECO:0000303" key="5">
    <source>
    </source>
</evidence>
<evidence type="ECO:0000303" key="6">
    <source>
    </source>
</evidence>
<evidence type="ECO:0000305" key="7"/>
<evidence type="ECO:0000312" key="8">
    <source>
        <dbReference type="Araport" id="AT3G15670"/>
    </source>
</evidence>
<evidence type="ECO:0000312" key="9">
    <source>
        <dbReference type="EMBL" id="BAB02298.1"/>
    </source>
</evidence>
<proteinExistence type="evidence at transcript level"/>
<reference key="1">
    <citation type="submission" date="1995-10" db="EMBL/GenBank/DDBJ databases">
        <title>A.thaliana mRNA for LEA76 type2 protein.</title>
        <authorList>
            <person name="Raynal M."/>
        </authorList>
    </citation>
    <scope>NUCLEOTIDE SEQUENCE [MRNA]</scope>
    <source>
        <strain>cv. Columbia</strain>
        <tissue>Dry seed</tissue>
    </source>
</reference>
<reference key="2">
    <citation type="journal article" date="2000" name="DNA Res.">
        <title>Structural analysis of Arabidopsis thaliana chromosome 3. I. Sequence features of the regions of 4,504,864 bp covered by sixty P1 and TAC clones.</title>
        <authorList>
            <person name="Sato S."/>
            <person name="Nakamura Y."/>
            <person name="Kaneko T."/>
            <person name="Katoh T."/>
            <person name="Asamizu E."/>
            <person name="Tabata S."/>
        </authorList>
    </citation>
    <scope>NUCLEOTIDE SEQUENCE [LARGE SCALE GENOMIC DNA]</scope>
    <source>
        <strain>cv. Columbia</strain>
    </source>
</reference>
<reference key="3">
    <citation type="journal article" date="2017" name="Plant J.">
        <title>Araport11: a complete reannotation of the Arabidopsis thaliana reference genome.</title>
        <authorList>
            <person name="Cheng C.Y."/>
            <person name="Krishnakumar V."/>
            <person name="Chan A.P."/>
            <person name="Thibaud-Nissen F."/>
            <person name="Schobel S."/>
            <person name="Town C.D."/>
        </authorList>
    </citation>
    <scope>GENOME REANNOTATION</scope>
    <source>
        <strain>cv. Columbia</strain>
    </source>
</reference>
<reference key="4">
    <citation type="journal article" date="2003" name="Science">
        <title>Empirical analysis of transcriptional activity in the Arabidopsis genome.</title>
        <authorList>
            <person name="Yamada K."/>
            <person name="Lim J."/>
            <person name="Dale J.M."/>
            <person name="Chen H."/>
            <person name="Shinn P."/>
            <person name="Palm C.J."/>
            <person name="Southwick A.M."/>
            <person name="Wu H.C."/>
            <person name="Kim C.J."/>
            <person name="Nguyen M."/>
            <person name="Pham P.K."/>
            <person name="Cheuk R.F."/>
            <person name="Karlin-Newmann G."/>
            <person name="Liu S.X."/>
            <person name="Lam B."/>
            <person name="Sakano H."/>
            <person name="Wu T."/>
            <person name="Yu G."/>
            <person name="Miranda M."/>
            <person name="Quach H.L."/>
            <person name="Tripp M."/>
            <person name="Chang C.H."/>
            <person name="Lee J.M."/>
            <person name="Toriumi M.J."/>
            <person name="Chan M.M."/>
            <person name="Tang C.C."/>
            <person name="Onodera C.S."/>
            <person name="Deng J.M."/>
            <person name="Akiyama K."/>
            <person name="Ansari Y."/>
            <person name="Arakawa T."/>
            <person name="Banh J."/>
            <person name="Banno F."/>
            <person name="Bowser L."/>
            <person name="Brooks S.Y."/>
            <person name="Carninci P."/>
            <person name="Chao Q."/>
            <person name="Choy N."/>
            <person name="Enju A."/>
            <person name="Goldsmith A.D."/>
            <person name="Gurjal M."/>
            <person name="Hansen N.F."/>
            <person name="Hayashizaki Y."/>
            <person name="Johnson-Hopson C."/>
            <person name="Hsuan V.W."/>
            <person name="Iida K."/>
            <person name="Karnes M."/>
            <person name="Khan S."/>
            <person name="Koesema E."/>
            <person name="Ishida J."/>
            <person name="Jiang P.X."/>
            <person name="Jones T."/>
            <person name="Kawai J."/>
            <person name="Kamiya A."/>
            <person name="Meyers C."/>
            <person name="Nakajima M."/>
            <person name="Narusaka M."/>
            <person name="Seki M."/>
            <person name="Sakurai T."/>
            <person name="Satou M."/>
            <person name="Tamse R."/>
            <person name="Vaysberg M."/>
            <person name="Wallender E.K."/>
            <person name="Wong C."/>
            <person name="Yamamura Y."/>
            <person name="Yuan S."/>
            <person name="Shinozaki K."/>
            <person name="Davis R.W."/>
            <person name="Theologis A."/>
            <person name="Ecker J.R."/>
        </authorList>
    </citation>
    <scope>NUCLEOTIDE SEQUENCE [LARGE SCALE MRNA]</scope>
    <source>
        <strain>cv. Columbia</strain>
    </source>
</reference>
<reference key="5">
    <citation type="journal article" date="2008" name="BMC Genomics">
        <title>LEA (late embryogenesis abundant) proteins and their encoding genes in Arabidopsis thaliana.</title>
        <authorList>
            <person name="Hundertmark M."/>
            <person name="Hincha D.K."/>
        </authorList>
    </citation>
    <scope>GENE FAMILY</scope>
    <scope>NOMENCLATURE</scope>
</reference>
<reference key="6">
    <citation type="journal article" date="2008" name="J. Exp. Bot.">
        <title>An Arabidopsis mutant able to green after extended dark periods shows decreased transcripts of seed protein genes and altered sensitivity to abscisic acid.</title>
        <authorList>
            <person name="Choy M.K."/>
            <person name="Sullivan J.A."/>
            <person name="Theobald J.C."/>
            <person name="Davies W.J."/>
            <person name="Gray J.C."/>
        </authorList>
    </citation>
    <scope>DEVELOPMENTAL STAGE</scope>
    <scope>INDUCTION BY DARK</scope>
</reference>
<reference key="7">
    <citation type="journal article" date="2014" name="Plant Cell">
        <title>The ubiquitous distribution of late embryogenesis abundant proteins across cell compartments in Arabidopsis offers tailored protection against abiotic stress.</title>
        <authorList>
            <person name="Candat A."/>
            <person name="Paszkiewicz G."/>
            <person name="Neveu M."/>
            <person name="Gautier R."/>
            <person name="Logan D.C."/>
            <person name="Avelange-Macherel M.-H."/>
            <person name="Macherel D."/>
        </authorList>
    </citation>
    <scope>SUBCELLULAR LOCATION</scope>
</reference>
<feature type="chain" id="PRO_0000438410" description="Late embryogenesis abundant protein 29">
    <location>
        <begin position="1"/>
        <end position="225"/>
    </location>
</feature>
<feature type="repeat" description="LEA 11-mer repeat" evidence="7">
    <location>
        <begin position="53"/>
        <end position="63"/>
    </location>
</feature>
<feature type="repeat" description="LEA 11-mer repeat" evidence="7">
    <location>
        <begin position="75"/>
        <end position="85"/>
    </location>
</feature>
<feature type="repeat" description="LEA 11-mer repeat" evidence="7">
    <location>
        <begin position="97"/>
        <end position="107"/>
    </location>
</feature>
<feature type="region of interest" description="Disordered" evidence="2">
    <location>
        <begin position="1"/>
        <end position="167"/>
    </location>
</feature>
<feature type="region of interest" description="Disordered" evidence="2">
    <location>
        <begin position="193"/>
        <end position="225"/>
    </location>
</feature>
<feature type="compositionally biased region" description="Basic and acidic residues" evidence="2">
    <location>
        <begin position="28"/>
        <end position="39"/>
    </location>
</feature>
<feature type="compositionally biased region" description="Basic and acidic residues" evidence="2">
    <location>
        <begin position="49"/>
        <end position="61"/>
    </location>
</feature>
<feature type="compositionally biased region" description="Basic and acidic residues" evidence="2">
    <location>
        <begin position="71"/>
        <end position="83"/>
    </location>
</feature>
<feature type="compositionally biased region" description="Basic and acidic residues" evidence="2">
    <location>
        <begin position="93"/>
        <end position="119"/>
    </location>
</feature>
<feature type="compositionally biased region" description="Polar residues" evidence="2">
    <location>
        <begin position="141"/>
        <end position="153"/>
    </location>
</feature>
<feature type="compositionally biased region" description="Basic and acidic residues" evidence="2">
    <location>
        <begin position="154"/>
        <end position="163"/>
    </location>
</feature>
<feature type="compositionally biased region" description="Low complexity" evidence="2">
    <location>
        <begin position="205"/>
        <end position="225"/>
    </location>
</feature>
<feature type="sequence conflict" description="In Ref. 1; CAA63006." evidence="7" ref="1">
    <original>ETT</original>
    <variation>KTM</variation>
    <location>
        <begin position="96"/>
        <end position="98"/>
    </location>
</feature>
<feature type="sequence conflict" description="In Ref. 1; CAA63006." evidence="7" ref="1">
    <original>KAREA</original>
    <variation>NVREG</variation>
    <location>
        <begin position="111"/>
        <end position="115"/>
    </location>
</feature>
<feature type="sequence conflict" description="In Ref. 1; CAA63006." evidence="7" ref="1">
    <original>T</original>
    <variation>A</variation>
    <location>
        <position position="155"/>
    </location>
</feature>
<sequence>MASNQQSYKAGETRGKAQEKTGQAMGTMRDKAEEGRDKTSQTAQTAQQKAHETAQSAKDKTSQTAQAAQQKAHETAQSAKEKTSQTAQTAQQKAHETTQAAKEKTSQAGDKAREAKDKAGSYLSETGEAIKNKAQDAAQYTKETAQGAAQYTKETAEAGRDKTGGFLSQTGEHVKQMAMGAADAVKHTFGMATEEEDKEHYPGSTTTTTATTRTTDPTHQTYQRK</sequence>
<comment type="function">
    <text evidence="1">Involved dehydration tolerance.</text>
</comment>
<comment type="subcellular location">
    <subcellularLocation>
        <location evidence="4">Cytoplasm</location>
        <location evidence="4">Cytosol</location>
    </subcellularLocation>
</comment>
<comment type="developmental stage">
    <text evidence="3">During seed development, expressed at late embryogenesis and in dry seeds.</text>
</comment>
<comment type="induction">
    <text evidence="3">Transiently up-regulated during prolonged dark.</text>
</comment>
<comment type="similarity">
    <text evidence="7">Belongs to the LEA type 4 family.</text>
</comment>
<protein>
    <recommendedName>
        <fullName evidence="5">Late embryogenesis abundant protein 29</fullName>
    </recommendedName>
    <alternativeName>
        <fullName evidence="7">LEA 76 homolog</fullName>
    </alternativeName>
</protein>
<accession>Q9LW12</accession>
<accession>Q42172</accession>
<accession>Q96271</accession>
<organism>
    <name type="scientific">Arabidopsis thaliana</name>
    <name type="common">Mouse-ear cress</name>
    <dbReference type="NCBI Taxonomy" id="3702"/>
    <lineage>
        <taxon>Eukaryota</taxon>
        <taxon>Viridiplantae</taxon>
        <taxon>Streptophyta</taxon>
        <taxon>Embryophyta</taxon>
        <taxon>Tracheophyta</taxon>
        <taxon>Spermatophyta</taxon>
        <taxon>Magnoliopsida</taxon>
        <taxon>eudicotyledons</taxon>
        <taxon>Gunneridae</taxon>
        <taxon>Pentapetalae</taxon>
        <taxon>rosids</taxon>
        <taxon>malvids</taxon>
        <taxon>Brassicales</taxon>
        <taxon>Brassicaceae</taxon>
        <taxon>Camelineae</taxon>
        <taxon>Arabidopsis</taxon>
    </lineage>
</organism>
<keyword id="KW-0963">Cytoplasm</keyword>
<keyword id="KW-1185">Reference proteome</keyword>
<keyword id="KW-0677">Repeat</keyword>
<keyword id="KW-0346">Stress response</keyword>